<sequence>MSFDTAKYPTLALVDSTAELRLLPKESLPKLCDELRRYLLDSVSRSSGHFASGLGTVELTVALHYVYNTPFDQLIWDVGHQAYPHKILTGRRDRIGTIRQKGGLHPFPWRGESEYDVLSVGHSSTSISAGIGIAVAAAREEKNRRTVCVIGDGAITAGMAFEAMNHAGDIRPDMLVILNDNEMSISENVGALNNHLAQLLSGKLYSTLREGGKRVFSNVPPIKELLKRTEEHIKGMVVPGTLFEELGFNYIGPVDGHDVLGLVNTLKNMRDLKGPQFLHIMTKKGRGYEPAEKDPITFHAVPKFDPESGTLPKSSGGQPSYSKIFGDWLCETAAKDDKLMAITPAMREGSGMVEFSRKYPAQYFDVAIAEQHAVTFAAGLAIGGYKPVVAIYSTFLQRAYDQVIHDVAIQKLPVLFAIDRAGIVGADGQTHQGAFDLSYLRCIPDMVIMTPSDENECRQMLFTGYHYNDGPSAVRYPRGNALGVTLEPLQKLPIGKGVVKRHGEKVALLNFGTLLPEATQAAEALNATLVDMRFVKPLDEALIMELAGRHEALVTIEENAVMGGAGSGVNEVLMAKRKPVPVLNIGLPDHFIPQGTQDEARAEIGLTASGIEQRVRDWLA</sequence>
<name>DXS_CROS8</name>
<proteinExistence type="inferred from homology"/>
<feature type="chain" id="PRO_1000019023" description="1-deoxy-D-xylulose-5-phosphate synthase">
    <location>
        <begin position="1"/>
        <end position="620"/>
    </location>
</feature>
<feature type="binding site" evidence="1">
    <location>
        <position position="80"/>
    </location>
    <ligand>
        <name>thiamine diphosphate</name>
        <dbReference type="ChEBI" id="CHEBI:58937"/>
    </ligand>
</feature>
<feature type="binding site" evidence="1">
    <location>
        <begin position="121"/>
        <end position="123"/>
    </location>
    <ligand>
        <name>thiamine diphosphate</name>
        <dbReference type="ChEBI" id="CHEBI:58937"/>
    </ligand>
</feature>
<feature type="binding site" evidence="1">
    <location>
        <position position="152"/>
    </location>
    <ligand>
        <name>Mg(2+)</name>
        <dbReference type="ChEBI" id="CHEBI:18420"/>
    </ligand>
</feature>
<feature type="binding site" evidence="1">
    <location>
        <begin position="153"/>
        <end position="154"/>
    </location>
    <ligand>
        <name>thiamine diphosphate</name>
        <dbReference type="ChEBI" id="CHEBI:58937"/>
    </ligand>
</feature>
<feature type="binding site" evidence="1">
    <location>
        <position position="181"/>
    </location>
    <ligand>
        <name>Mg(2+)</name>
        <dbReference type="ChEBI" id="CHEBI:18420"/>
    </ligand>
</feature>
<feature type="binding site" evidence="1">
    <location>
        <position position="181"/>
    </location>
    <ligand>
        <name>thiamine diphosphate</name>
        <dbReference type="ChEBI" id="CHEBI:58937"/>
    </ligand>
</feature>
<feature type="binding site" evidence="1">
    <location>
        <position position="288"/>
    </location>
    <ligand>
        <name>thiamine diphosphate</name>
        <dbReference type="ChEBI" id="CHEBI:58937"/>
    </ligand>
</feature>
<feature type="binding site" evidence="1">
    <location>
        <position position="370"/>
    </location>
    <ligand>
        <name>thiamine diphosphate</name>
        <dbReference type="ChEBI" id="CHEBI:58937"/>
    </ligand>
</feature>
<organism>
    <name type="scientific">Cronobacter sakazakii (strain ATCC BAA-894)</name>
    <name type="common">Enterobacter sakazakii</name>
    <dbReference type="NCBI Taxonomy" id="290339"/>
    <lineage>
        <taxon>Bacteria</taxon>
        <taxon>Pseudomonadati</taxon>
        <taxon>Pseudomonadota</taxon>
        <taxon>Gammaproteobacteria</taxon>
        <taxon>Enterobacterales</taxon>
        <taxon>Enterobacteriaceae</taxon>
        <taxon>Cronobacter</taxon>
    </lineage>
</organism>
<accession>A7MFG0</accession>
<evidence type="ECO:0000255" key="1">
    <source>
        <dbReference type="HAMAP-Rule" id="MF_00315"/>
    </source>
</evidence>
<comment type="function">
    <text evidence="1">Catalyzes the acyloin condensation reaction between C atoms 2 and 3 of pyruvate and glyceraldehyde 3-phosphate to yield 1-deoxy-D-xylulose-5-phosphate (DXP).</text>
</comment>
<comment type="catalytic activity">
    <reaction evidence="1">
        <text>D-glyceraldehyde 3-phosphate + pyruvate + H(+) = 1-deoxy-D-xylulose 5-phosphate + CO2</text>
        <dbReference type="Rhea" id="RHEA:12605"/>
        <dbReference type="ChEBI" id="CHEBI:15361"/>
        <dbReference type="ChEBI" id="CHEBI:15378"/>
        <dbReference type="ChEBI" id="CHEBI:16526"/>
        <dbReference type="ChEBI" id="CHEBI:57792"/>
        <dbReference type="ChEBI" id="CHEBI:59776"/>
        <dbReference type="EC" id="2.2.1.7"/>
    </reaction>
</comment>
<comment type="cofactor">
    <cofactor evidence="1">
        <name>Mg(2+)</name>
        <dbReference type="ChEBI" id="CHEBI:18420"/>
    </cofactor>
    <text evidence="1">Binds 1 Mg(2+) ion per subunit.</text>
</comment>
<comment type="cofactor">
    <cofactor evidence="1">
        <name>thiamine diphosphate</name>
        <dbReference type="ChEBI" id="CHEBI:58937"/>
    </cofactor>
    <text evidence="1">Binds 1 thiamine pyrophosphate per subunit.</text>
</comment>
<comment type="pathway">
    <text evidence="1">Metabolic intermediate biosynthesis; 1-deoxy-D-xylulose 5-phosphate biosynthesis; 1-deoxy-D-xylulose 5-phosphate from D-glyceraldehyde 3-phosphate and pyruvate: step 1/1.</text>
</comment>
<comment type="subunit">
    <text evidence="1">Homodimer.</text>
</comment>
<comment type="similarity">
    <text evidence="1">Belongs to the transketolase family. DXPS subfamily.</text>
</comment>
<protein>
    <recommendedName>
        <fullName evidence="1">1-deoxy-D-xylulose-5-phosphate synthase</fullName>
        <ecNumber evidence="1">2.2.1.7</ecNumber>
    </recommendedName>
    <alternativeName>
        <fullName evidence="1">1-deoxyxylulose-5-phosphate synthase</fullName>
        <shortName evidence="1">DXP synthase</shortName>
        <shortName evidence="1">DXPS</shortName>
    </alternativeName>
</protein>
<gene>
    <name evidence="1" type="primary">dxs</name>
    <name type="ordered locus">ESA_02882</name>
</gene>
<dbReference type="EC" id="2.2.1.7" evidence="1"/>
<dbReference type="EMBL" id="CP000783">
    <property type="protein sequence ID" value="ABU78111.1"/>
    <property type="molecule type" value="Genomic_DNA"/>
</dbReference>
<dbReference type="RefSeq" id="WP_012125497.1">
    <property type="nucleotide sequence ID" value="NC_009778.1"/>
</dbReference>
<dbReference type="SMR" id="A7MFG0"/>
<dbReference type="KEGG" id="esa:ESA_02882"/>
<dbReference type="PATRIC" id="fig|290339.8.peg.2573"/>
<dbReference type="HOGENOM" id="CLU_009227_1_4_6"/>
<dbReference type="UniPathway" id="UPA00064">
    <property type="reaction ID" value="UER00091"/>
</dbReference>
<dbReference type="Proteomes" id="UP000000260">
    <property type="component" value="Chromosome"/>
</dbReference>
<dbReference type="GO" id="GO:0005829">
    <property type="term" value="C:cytosol"/>
    <property type="evidence" value="ECO:0007669"/>
    <property type="project" value="TreeGrafter"/>
</dbReference>
<dbReference type="GO" id="GO:0008661">
    <property type="term" value="F:1-deoxy-D-xylulose-5-phosphate synthase activity"/>
    <property type="evidence" value="ECO:0007669"/>
    <property type="project" value="UniProtKB-UniRule"/>
</dbReference>
<dbReference type="GO" id="GO:0000287">
    <property type="term" value="F:magnesium ion binding"/>
    <property type="evidence" value="ECO:0007669"/>
    <property type="project" value="UniProtKB-UniRule"/>
</dbReference>
<dbReference type="GO" id="GO:0030976">
    <property type="term" value="F:thiamine pyrophosphate binding"/>
    <property type="evidence" value="ECO:0007669"/>
    <property type="project" value="UniProtKB-UniRule"/>
</dbReference>
<dbReference type="GO" id="GO:0052865">
    <property type="term" value="P:1-deoxy-D-xylulose 5-phosphate biosynthetic process"/>
    <property type="evidence" value="ECO:0007669"/>
    <property type="project" value="UniProtKB-UniPathway"/>
</dbReference>
<dbReference type="GO" id="GO:0019288">
    <property type="term" value="P:isopentenyl diphosphate biosynthetic process, methylerythritol 4-phosphate pathway"/>
    <property type="evidence" value="ECO:0007669"/>
    <property type="project" value="TreeGrafter"/>
</dbReference>
<dbReference type="GO" id="GO:0016114">
    <property type="term" value="P:terpenoid biosynthetic process"/>
    <property type="evidence" value="ECO:0007669"/>
    <property type="project" value="UniProtKB-UniRule"/>
</dbReference>
<dbReference type="GO" id="GO:0009228">
    <property type="term" value="P:thiamine biosynthetic process"/>
    <property type="evidence" value="ECO:0007669"/>
    <property type="project" value="UniProtKB-UniRule"/>
</dbReference>
<dbReference type="CDD" id="cd02007">
    <property type="entry name" value="TPP_DXS"/>
    <property type="match status" value="1"/>
</dbReference>
<dbReference type="CDD" id="cd07033">
    <property type="entry name" value="TPP_PYR_DXS_TK_like"/>
    <property type="match status" value="1"/>
</dbReference>
<dbReference type="FunFam" id="3.40.50.920:FF:000002">
    <property type="entry name" value="1-deoxy-D-xylulose-5-phosphate synthase"/>
    <property type="match status" value="1"/>
</dbReference>
<dbReference type="FunFam" id="3.40.50.970:FF:000005">
    <property type="entry name" value="1-deoxy-D-xylulose-5-phosphate synthase"/>
    <property type="match status" value="1"/>
</dbReference>
<dbReference type="Gene3D" id="3.40.50.920">
    <property type="match status" value="1"/>
</dbReference>
<dbReference type="Gene3D" id="3.40.50.970">
    <property type="match status" value="2"/>
</dbReference>
<dbReference type="HAMAP" id="MF_00315">
    <property type="entry name" value="DXP_synth"/>
    <property type="match status" value="1"/>
</dbReference>
<dbReference type="InterPro" id="IPR005477">
    <property type="entry name" value="Dxylulose-5-P_synthase"/>
</dbReference>
<dbReference type="InterPro" id="IPR029061">
    <property type="entry name" value="THDP-binding"/>
</dbReference>
<dbReference type="InterPro" id="IPR009014">
    <property type="entry name" value="Transketo_C/PFOR_II"/>
</dbReference>
<dbReference type="InterPro" id="IPR005475">
    <property type="entry name" value="Transketolase-like_Pyr-bd"/>
</dbReference>
<dbReference type="InterPro" id="IPR020826">
    <property type="entry name" value="Transketolase_BS"/>
</dbReference>
<dbReference type="InterPro" id="IPR033248">
    <property type="entry name" value="Transketolase_C"/>
</dbReference>
<dbReference type="InterPro" id="IPR049557">
    <property type="entry name" value="Transketolase_CS"/>
</dbReference>
<dbReference type="NCBIfam" id="TIGR00204">
    <property type="entry name" value="dxs"/>
    <property type="match status" value="1"/>
</dbReference>
<dbReference type="NCBIfam" id="NF003933">
    <property type="entry name" value="PRK05444.2-2"/>
    <property type="match status" value="1"/>
</dbReference>
<dbReference type="PANTHER" id="PTHR43322">
    <property type="entry name" value="1-D-DEOXYXYLULOSE 5-PHOSPHATE SYNTHASE-RELATED"/>
    <property type="match status" value="1"/>
</dbReference>
<dbReference type="PANTHER" id="PTHR43322:SF5">
    <property type="entry name" value="1-DEOXY-D-XYLULOSE-5-PHOSPHATE SYNTHASE, CHLOROPLASTIC"/>
    <property type="match status" value="1"/>
</dbReference>
<dbReference type="Pfam" id="PF13292">
    <property type="entry name" value="DXP_synthase_N"/>
    <property type="match status" value="1"/>
</dbReference>
<dbReference type="Pfam" id="PF02779">
    <property type="entry name" value="Transket_pyr"/>
    <property type="match status" value="1"/>
</dbReference>
<dbReference type="Pfam" id="PF02780">
    <property type="entry name" value="Transketolase_C"/>
    <property type="match status" value="1"/>
</dbReference>
<dbReference type="SMART" id="SM00861">
    <property type="entry name" value="Transket_pyr"/>
    <property type="match status" value="1"/>
</dbReference>
<dbReference type="SUPFAM" id="SSF52518">
    <property type="entry name" value="Thiamin diphosphate-binding fold (THDP-binding)"/>
    <property type="match status" value="2"/>
</dbReference>
<dbReference type="SUPFAM" id="SSF52922">
    <property type="entry name" value="TK C-terminal domain-like"/>
    <property type="match status" value="1"/>
</dbReference>
<dbReference type="PROSITE" id="PS00801">
    <property type="entry name" value="TRANSKETOLASE_1"/>
    <property type="match status" value="1"/>
</dbReference>
<dbReference type="PROSITE" id="PS00802">
    <property type="entry name" value="TRANSKETOLASE_2"/>
    <property type="match status" value="1"/>
</dbReference>
<keyword id="KW-0414">Isoprene biosynthesis</keyword>
<keyword id="KW-0460">Magnesium</keyword>
<keyword id="KW-0479">Metal-binding</keyword>
<keyword id="KW-1185">Reference proteome</keyword>
<keyword id="KW-0784">Thiamine biosynthesis</keyword>
<keyword id="KW-0786">Thiamine pyrophosphate</keyword>
<keyword id="KW-0808">Transferase</keyword>
<reference key="1">
    <citation type="journal article" date="2010" name="PLoS ONE">
        <title>Genome sequence of Cronobacter sakazakii BAA-894 and comparative genomic hybridization analysis with other Cronobacter species.</title>
        <authorList>
            <person name="Kucerova E."/>
            <person name="Clifton S.W."/>
            <person name="Xia X.Q."/>
            <person name="Long F."/>
            <person name="Porwollik S."/>
            <person name="Fulton L."/>
            <person name="Fronick C."/>
            <person name="Minx P."/>
            <person name="Kyung K."/>
            <person name="Warren W."/>
            <person name="Fulton R."/>
            <person name="Feng D."/>
            <person name="Wollam A."/>
            <person name="Shah N."/>
            <person name="Bhonagiri V."/>
            <person name="Nash W.E."/>
            <person name="Hallsworth-Pepin K."/>
            <person name="Wilson R.K."/>
            <person name="McClelland M."/>
            <person name="Forsythe S.J."/>
        </authorList>
    </citation>
    <scope>NUCLEOTIDE SEQUENCE [LARGE SCALE GENOMIC DNA]</scope>
    <source>
        <strain>ATCC BAA-894</strain>
    </source>
</reference>